<sequence>MSNGIVIIGSGFAARQLVKNIRKQDATIPLTLIAADSMDEYNKPDLSHVISQGQRADDLTRQTAGEFAEQFNLRLFPHTWVTDIDAEARVVKSQNNQWQYDKLVLATGASAFVPPVPGRELMLTLNSQQEYRACETQLRDARRVLIVGGGLIGSELAMDFCRAGKAVTLIDNAASILASLMPPEVSSRLQHRLTEMGVHLLLKSQLQGLEKTDSGILATLDRQRSIEVDAVIAATGLRPETALARRAGLTINRGVCVDSYLQTRNADIYALGDCAEINGQVLPFLQPIQLSAMVLAKNLLGNNTPLKLPAMLVKIKTPELPLHLAGETQRRDLRWQICTESQGMVARGVDGADQLRAFVVSEDRMKEAFGLLKTLPM</sequence>
<organism>
    <name type="scientific">Escherichia coli (strain SE11)</name>
    <dbReference type="NCBI Taxonomy" id="409438"/>
    <lineage>
        <taxon>Bacteria</taxon>
        <taxon>Pseudomonadati</taxon>
        <taxon>Pseudomonadota</taxon>
        <taxon>Gammaproteobacteria</taxon>
        <taxon>Enterobacterales</taxon>
        <taxon>Enterobacteriaceae</taxon>
        <taxon>Escherichia</taxon>
    </lineage>
</organism>
<proteinExistence type="inferred from homology"/>
<gene>
    <name evidence="1" type="primary">norW</name>
    <name evidence="1" type="synonym">flrR</name>
    <name type="ordered locus">ECSE_2959</name>
</gene>
<dbReference type="EC" id="1.18.1.-" evidence="1"/>
<dbReference type="EMBL" id="AP009240">
    <property type="protein sequence ID" value="BAG78483.1"/>
    <property type="molecule type" value="Genomic_DNA"/>
</dbReference>
<dbReference type="RefSeq" id="WP_000064758.1">
    <property type="nucleotide sequence ID" value="NC_011415.1"/>
</dbReference>
<dbReference type="SMR" id="B6I697"/>
<dbReference type="KEGG" id="ecy:ECSE_2959"/>
<dbReference type="HOGENOM" id="CLU_003291_4_4_6"/>
<dbReference type="UniPathway" id="UPA00638"/>
<dbReference type="Proteomes" id="UP000008199">
    <property type="component" value="Chromosome"/>
</dbReference>
<dbReference type="GO" id="GO:0005737">
    <property type="term" value="C:cytoplasm"/>
    <property type="evidence" value="ECO:0007669"/>
    <property type="project" value="UniProtKB-SubCell"/>
</dbReference>
<dbReference type="GO" id="GO:0016731">
    <property type="term" value="F:oxidoreductase activity, acting on iron-sulfur proteins as donors, NAD or NADP as acceptor"/>
    <property type="evidence" value="ECO:0007669"/>
    <property type="project" value="UniProtKB-UniRule"/>
</dbReference>
<dbReference type="FunFam" id="3.50.50.60:FF:000075">
    <property type="entry name" value="Nitric oxide reductase FlRd-NAD(+) reductase"/>
    <property type="match status" value="1"/>
</dbReference>
<dbReference type="Gene3D" id="3.30.390.120">
    <property type="match status" value="1"/>
</dbReference>
<dbReference type="Gene3D" id="3.50.50.60">
    <property type="entry name" value="FAD/NAD(P)-binding domain"/>
    <property type="match status" value="2"/>
</dbReference>
<dbReference type="HAMAP" id="MF_01313">
    <property type="entry name" value="NorW"/>
    <property type="match status" value="1"/>
</dbReference>
<dbReference type="InterPro" id="IPR050260">
    <property type="entry name" value="FAD-bd_OxRdtase"/>
</dbReference>
<dbReference type="InterPro" id="IPR036188">
    <property type="entry name" value="FAD/NAD-bd_sf"/>
</dbReference>
<dbReference type="InterPro" id="IPR023753">
    <property type="entry name" value="FAD/NAD-binding_dom"/>
</dbReference>
<dbReference type="InterPro" id="IPR023961">
    <property type="entry name" value="NO_rdtase_NorW"/>
</dbReference>
<dbReference type="InterPro" id="IPR041364">
    <property type="entry name" value="Rbx-bd"/>
</dbReference>
<dbReference type="NCBIfam" id="NF003437">
    <property type="entry name" value="PRK04965.1"/>
    <property type="match status" value="1"/>
</dbReference>
<dbReference type="PANTHER" id="PTHR43429:SF3">
    <property type="entry name" value="NITRITE REDUCTASE [NAD(P)H]"/>
    <property type="match status" value="1"/>
</dbReference>
<dbReference type="PANTHER" id="PTHR43429">
    <property type="entry name" value="PYRIDINE NUCLEOTIDE-DISULFIDE OXIDOREDUCTASE DOMAIN-CONTAINING"/>
    <property type="match status" value="1"/>
</dbReference>
<dbReference type="Pfam" id="PF07992">
    <property type="entry name" value="Pyr_redox_2"/>
    <property type="match status" value="1"/>
</dbReference>
<dbReference type="Pfam" id="PF18113">
    <property type="entry name" value="Rbx_binding"/>
    <property type="match status" value="1"/>
</dbReference>
<dbReference type="PRINTS" id="PR00368">
    <property type="entry name" value="FADPNR"/>
</dbReference>
<dbReference type="PRINTS" id="PR00411">
    <property type="entry name" value="PNDRDTASEI"/>
</dbReference>
<dbReference type="SUPFAM" id="SSF51905">
    <property type="entry name" value="FAD/NAD(P)-binding domain"/>
    <property type="match status" value="1"/>
</dbReference>
<accession>B6I697</accession>
<name>NORW_ECOSE</name>
<keyword id="KW-0963">Cytoplasm</keyword>
<keyword id="KW-0274">FAD</keyword>
<keyword id="KW-0285">Flavoprotein</keyword>
<keyword id="KW-0520">NAD</keyword>
<keyword id="KW-0560">Oxidoreductase</keyword>
<comment type="function">
    <text evidence="1">One of at least two accessory proteins for anaerobic nitric oxide (NO) reductase. Reduces the rubredoxin moiety of NO reductase.</text>
</comment>
<comment type="catalytic activity">
    <reaction evidence="1">
        <text>2 reduced [nitric oxide reductase rubredoxin domain] + NAD(+) + H(+) = 2 oxidized [nitric oxide reductase rubredoxin domain] + NADH</text>
        <dbReference type="Rhea" id="RHEA:42960"/>
        <dbReference type="Rhea" id="RHEA-COMP:10304"/>
        <dbReference type="Rhea" id="RHEA-COMP:10305"/>
        <dbReference type="ChEBI" id="CHEBI:15378"/>
        <dbReference type="ChEBI" id="CHEBI:29033"/>
        <dbReference type="ChEBI" id="CHEBI:29034"/>
        <dbReference type="ChEBI" id="CHEBI:57540"/>
        <dbReference type="ChEBI" id="CHEBI:57945"/>
    </reaction>
</comment>
<comment type="cofactor">
    <cofactor evidence="1">
        <name>FAD</name>
        <dbReference type="ChEBI" id="CHEBI:57692"/>
    </cofactor>
</comment>
<comment type="pathway">
    <text evidence="1">Nitrogen metabolism; nitric oxide reduction.</text>
</comment>
<comment type="subcellular location">
    <subcellularLocation>
        <location evidence="1">Cytoplasm</location>
    </subcellularLocation>
</comment>
<comment type="similarity">
    <text evidence="1">Belongs to the FAD-dependent oxidoreductase family.</text>
</comment>
<feature type="chain" id="PRO_1000141172" description="Nitric oxide reductase FlRd-NAD(+) reductase">
    <location>
        <begin position="1"/>
        <end position="377"/>
    </location>
</feature>
<evidence type="ECO:0000255" key="1">
    <source>
        <dbReference type="HAMAP-Rule" id="MF_01313"/>
    </source>
</evidence>
<protein>
    <recommendedName>
        <fullName evidence="1">Nitric oxide reductase FlRd-NAD(+) reductase</fullName>
        <ecNumber evidence="1">1.18.1.-</ecNumber>
    </recommendedName>
    <alternativeName>
        <fullName evidence="1">Flavorubredoxin reductase</fullName>
        <shortName evidence="1">FlRd-reductase</shortName>
        <shortName evidence="1">FlavoRb reductase</shortName>
    </alternativeName>
</protein>
<reference key="1">
    <citation type="journal article" date="2008" name="DNA Res.">
        <title>Complete genome sequence and comparative analysis of the wild-type commensal Escherichia coli strain SE11 isolated from a healthy adult.</title>
        <authorList>
            <person name="Oshima K."/>
            <person name="Toh H."/>
            <person name="Ogura Y."/>
            <person name="Sasamoto H."/>
            <person name="Morita H."/>
            <person name="Park S.-H."/>
            <person name="Ooka T."/>
            <person name="Iyoda S."/>
            <person name="Taylor T.D."/>
            <person name="Hayashi T."/>
            <person name="Itoh K."/>
            <person name="Hattori M."/>
        </authorList>
    </citation>
    <scope>NUCLEOTIDE SEQUENCE [LARGE SCALE GENOMIC DNA]</scope>
    <source>
        <strain>SE11</strain>
    </source>
</reference>